<protein>
    <recommendedName>
        <fullName evidence="1">UPF0178 protein YaiI</fullName>
    </recommendedName>
</protein>
<proteinExistence type="inferred from homology"/>
<organism>
    <name type="scientific">Salmonella arizonae (strain ATCC BAA-731 / CDC346-86 / RSK2980)</name>
    <dbReference type="NCBI Taxonomy" id="41514"/>
    <lineage>
        <taxon>Bacteria</taxon>
        <taxon>Pseudomonadati</taxon>
        <taxon>Pseudomonadota</taxon>
        <taxon>Gammaproteobacteria</taxon>
        <taxon>Enterobacterales</taxon>
        <taxon>Enterobacteriaceae</taxon>
        <taxon>Salmonella</taxon>
    </lineage>
</organism>
<evidence type="ECO:0000255" key="1">
    <source>
        <dbReference type="HAMAP-Rule" id="MF_00489"/>
    </source>
</evidence>
<reference key="1">
    <citation type="submission" date="2007-11" db="EMBL/GenBank/DDBJ databases">
        <authorList>
            <consortium name="The Salmonella enterica serovar Arizonae Genome Sequencing Project"/>
            <person name="McClelland M."/>
            <person name="Sanderson E.K."/>
            <person name="Porwollik S."/>
            <person name="Spieth J."/>
            <person name="Clifton W.S."/>
            <person name="Fulton R."/>
            <person name="Chunyan W."/>
            <person name="Wollam A."/>
            <person name="Shah N."/>
            <person name="Pepin K."/>
            <person name="Bhonagiri V."/>
            <person name="Nash W."/>
            <person name="Johnson M."/>
            <person name="Thiruvilangam P."/>
            <person name="Wilson R."/>
        </authorList>
    </citation>
    <scope>NUCLEOTIDE SEQUENCE [LARGE SCALE GENOMIC DNA]</scope>
    <source>
        <strain>ATCC BAA-731 / CDC346-86 / RSK2980</strain>
    </source>
</reference>
<name>YAII_SALAR</name>
<gene>
    <name evidence="1" type="primary">yaiI</name>
    <name type="ordered locus">SARI_02539</name>
</gene>
<comment type="similarity">
    <text evidence="1">Belongs to the UPF0178 family.</text>
</comment>
<sequence>MTIWVDADACPNVIKEILYRAAERMQLPLILVANQALRVPPSRFIRTLRVAAGFDVADNEIVRQCETGDLVITADIPLAAEVLERGAAALNPRGERYSEATIRERLTMRDFMDTLRASGVQTGGPNSLSPRDRQHFAAELDKWWLEIQRKK</sequence>
<keyword id="KW-1185">Reference proteome</keyword>
<accession>A9MMS3</accession>
<dbReference type="EMBL" id="CP000880">
    <property type="protein sequence ID" value="ABX22398.1"/>
    <property type="molecule type" value="Genomic_DNA"/>
</dbReference>
<dbReference type="STRING" id="41514.SARI_02539"/>
<dbReference type="KEGG" id="ses:SARI_02539"/>
<dbReference type="HOGENOM" id="CLU_106619_1_0_6"/>
<dbReference type="Proteomes" id="UP000002084">
    <property type="component" value="Chromosome"/>
</dbReference>
<dbReference type="CDD" id="cd18720">
    <property type="entry name" value="PIN_YqxD-like"/>
    <property type="match status" value="1"/>
</dbReference>
<dbReference type="HAMAP" id="MF_00489">
    <property type="entry name" value="UPF0178"/>
    <property type="match status" value="1"/>
</dbReference>
<dbReference type="InterPro" id="IPR003791">
    <property type="entry name" value="UPF0178"/>
</dbReference>
<dbReference type="NCBIfam" id="NF001095">
    <property type="entry name" value="PRK00124.1"/>
    <property type="match status" value="1"/>
</dbReference>
<dbReference type="PANTHER" id="PTHR35146">
    <property type="entry name" value="UPF0178 PROTEIN YAII"/>
    <property type="match status" value="1"/>
</dbReference>
<dbReference type="PANTHER" id="PTHR35146:SF1">
    <property type="entry name" value="UPF0178 PROTEIN YAII"/>
    <property type="match status" value="1"/>
</dbReference>
<dbReference type="Pfam" id="PF02639">
    <property type="entry name" value="DUF188"/>
    <property type="match status" value="1"/>
</dbReference>
<feature type="chain" id="PRO_1000081382" description="UPF0178 protein YaiI">
    <location>
        <begin position="1"/>
        <end position="151"/>
    </location>
</feature>